<accession>Q1I646</accession>
<proteinExistence type="inferred from homology"/>
<reference key="1">
    <citation type="journal article" date="2006" name="Nat. Biotechnol.">
        <title>Complete genome sequence of the entomopathogenic and metabolically versatile soil bacterium Pseudomonas entomophila.</title>
        <authorList>
            <person name="Vodovar N."/>
            <person name="Vallenet D."/>
            <person name="Cruveiller S."/>
            <person name="Rouy Z."/>
            <person name="Barbe V."/>
            <person name="Acosta C."/>
            <person name="Cattolico L."/>
            <person name="Jubin C."/>
            <person name="Lajus A."/>
            <person name="Segurens B."/>
            <person name="Vacherie B."/>
            <person name="Wincker P."/>
            <person name="Weissenbach J."/>
            <person name="Lemaitre B."/>
            <person name="Medigue C."/>
            <person name="Boccard F."/>
        </authorList>
    </citation>
    <scope>NUCLEOTIDE SEQUENCE [LARGE SCALE GENOMIC DNA]</scope>
    <source>
        <strain>L48</strain>
    </source>
</reference>
<comment type="function">
    <text evidence="1">Catalyzes the reversible conversion of 2-phosphoglycerate (2-PG) into phosphoenolpyruvate (PEP). It is essential for the degradation of carbohydrates via glycolysis.</text>
</comment>
<comment type="catalytic activity">
    <reaction evidence="1">
        <text>(2R)-2-phosphoglycerate = phosphoenolpyruvate + H2O</text>
        <dbReference type="Rhea" id="RHEA:10164"/>
        <dbReference type="ChEBI" id="CHEBI:15377"/>
        <dbReference type="ChEBI" id="CHEBI:58289"/>
        <dbReference type="ChEBI" id="CHEBI:58702"/>
        <dbReference type="EC" id="4.2.1.11"/>
    </reaction>
</comment>
<comment type="cofactor">
    <cofactor evidence="1">
        <name>Mg(2+)</name>
        <dbReference type="ChEBI" id="CHEBI:18420"/>
    </cofactor>
    <text evidence="1">Binds a second Mg(2+) ion via substrate during catalysis.</text>
</comment>
<comment type="pathway">
    <text evidence="1">Carbohydrate degradation; glycolysis; pyruvate from D-glyceraldehyde 3-phosphate: step 4/5.</text>
</comment>
<comment type="subunit">
    <text evidence="1">Component of the RNA degradosome, a multiprotein complex involved in RNA processing and mRNA degradation.</text>
</comment>
<comment type="subcellular location">
    <subcellularLocation>
        <location evidence="1">Cytoplasm</location>
    </subcellularLocation>
    <subcellularLocation>
        <location evidence="1">Secreted</location>
    </subcellularLocation>
    <subcellularLocation>
        <location evidence="1">Cell surface</location>
    </subcellularLocation>
    <text evidence="1">Fractions of enolase are present in both the cytoplasm and on the cell surface.</text>
</comment>
<comment type="similarity">
    <text evidence="1">Belongs to the enolase family.</text>
</comment>
<name>ENO_PSEE4</name>
<dbReference type="EC" id="4.2.1.11" evidence="1"/>
<dbReference type="EMBL" id="CT573326">
    <property type="protein sequence ID" value="CAK16889.1"/>
    <property type="molecule type" value="Genomic_DNA"/>
</dbReference>
<dbReference type="RefSeq" id="WP_011535260.1">
    <property type="nucleotide sequence ID" value="NC_008027.1"/>
</dbReference>
<dbReference type="SMR" id="Q1I646"/>
<dbReference type="STRING" id="384676.PSEEN4200"/>
<dbReference type="GeneID" id="32807207"/>
<dbReference type="KEGG" id="pen:PSEEN4200"/>
<dbReference type="eggNOG" id="COG0148">
    <property type="taxonomic scope" value="Bacteria"/>
</dbReference>
<dbReference type="HOGENOM" id="CLU_031223_2_1_6"/>
<dbReference type="OrthoDB" id="9804716at2"/>
<dbReference type="UniPathway" id="UPA00109">
    <property type="reaction ID" value="UER00187"/>
</dbReference>
<dbReference type="Proteomes" id="UP000000658">
    <property type="component" value="Chromosome"/>
</dbReference>
<dbReference type="GO" id="GO:0009986">
    <property type="term" value="C:cell surface"/>
    <property type="evidence" value="ECO:0007669"/>
    <property type="project" value="UniProtKB-SubCell"/>
</dbReference>
<dbReference type="GO" id="GO:0005576">
    <property type="term" value="C:extracellular region"/>
    <property type="evidence" value="ECO:0007669"/>
    <property type="project" value="UniProtKB-SubCell"/>
</dbReference>
<dbReference type="GO" id="GO:0000015">
    <property type="term" value="C:phosphopyruvate hydratase complex"/>
    <property type="evidence" value="ECO:0007669"/>
    <property type="project" value="InterPro"/>
</dbReference>
<dbReference type="GO" id="GO:0000287">
    <property type="term" value="F:magnesium ion binding"/>
    <property type="evidence" value="ECO:0007669"/>
    <property type="project" value="UniProtKB-UniRule"/>
</dbReference>
<dbReference type="GO" id="GO:0004634">
    <property type="term" value="F:phosphopyruvate hydratase activity"/>
    <property type="evidence" value="ECO:0007669"/>
    <property type="project" value="UniProtKB-UniRule"/>
</dbReference>
<dbReference type="GO" id="GO:0006096">
    <property type="term" value="P:glycolytic process"/>
    <property type="evidence" value="ECO:0007669"/>
    <property type="project" value="UniProtKB-UniRule"/>
</dbReference>
<dbReference type="CDD" id="cd03313">
    <property type="entry name" value="enolase"/>
    <property type="match status" value="1"/>
</dbReference>
<dbReference type="FunFam" id="3.20.20.120:FF:000001">
    <property type="entry name" value="Enolase"/>
    <property type="match status" value="1"/>
</dbReference>
<dbReference type="FunFam" id="3.30.390.10:FF:000001">
    <property type="entry name" value="Enolase"/>
    <property type="match status" value="1"/>
</dbReference>
<dbReference type="Gene3D" id="3.20.20.120">
    <property type="entry name" value="Enolase-like C-terminal domain"/>
    <property type="match status" value="1"/>
</dbReference>
<dbReference type="Gene3D" id="3.30.390.10">
    <property type="entry name" value="Enolase-like, N-terminal domain"/>
    <property type="match status" value="1"/>
</dbReference>
<dbReference type="HAMAP" id="MF_00318">
    <property type="entry name" value="Enolase"/>
    <property type="match status" value="1"/>
</dbReference>
<dbReference type="InterPro" id="IPR000941">
    <property type="entry name" value="Enolase"/>
</dbReference>
<dbReference type="InterPro" id="IPR036849">
    <property type="entry name" value="Enolase-like_C_sf"/>
</dbReference>
<dbReference type="InterPro" id="IPR029017">
    <property type="entry name" value="Enolase-like_N"/>
</dbReference>
<dbReference type="InterPro" id="IPR020810">
    <property type="entry name" value="Enolase_C"/>
</dbReference>
<dbReference type="InterPro" id="IPR020809">
    <property type="entry name" value="Enolase_CS"/>
</dbReference>
<dbReference type="InterPro" id="IPR020811">
    <property type="entry name" value="Enolase_N"/>
</dbReference>
<dbReference type="NCBIfam" id="TIGR01060">
    <property type="entry name" value="eno"/>
    <property type="match status" value="1"/>
</dbReference>
<dbReference type="PANTHER" id="PTHR11902">
    <property type="entry name" value="ENOLASE"/>
    <property type="match status" value="1"/>
</dbReference>
<dbReference type="PANTHER" id="PTHR11902:SF1">
    <property type="entry name" value="ENOLASE"/>
    <property type="match status" value="1"/>
</dbReference>
<dbReference type="Pfam" id="PF00113">
    <property type="entry name" value="Enolase_C"/>
    <property type="match status" value="1"/>
</dbReference>
<dbReference type="Pfam" id="PF03952">
    <property type="entry name" value="Enolase_N"/>
    <property type="match status" value="1"/>
</dbReference>
<dbReference type="PIRSF" id="PIRSF001400">
    <property type="entry name" value="Enolase"/>
    <property type="match status" value="1"/>
</dbReference>
<dbReference type="PRINTS" id="PR00148">
    <property type="entry name" value="ENOLASE"/>
</dbReference>
<dbReference type="SFLD" id="SFLDS00001">
    <property type="entry name" value="Enolase"/>
    <property type="match status" value="1"/>
</dbReference>
<dbReference type="SFLD" id="SFLDF00002">
    <property type="entry name" value="enolase"/>
    <property type="match status" value="1"/>
</dbReference>
<dbReference type="SMART" id="SM01192">
    <property type="entry name" value="Enolase_C"/>
    <property type="match status" value="1"/>
</dbReference>
<dbReference type="SMART" id="SM01193">
    <property type="entry name" value="Enolase_N"/>
    <property type="match status" value="1"/>
</dbReference>
<dbReference type="SUPFAM" id="SSF51604">
    <property type="entry name" value="Enolase C-terminal domain-like"/>
    <property type="match status" value="1"/>
</dbReference>
<dbReference type="SUPFAM" id="SSF54826">
    <property type="entry name" value="Enolase N-terminal domain-like"/>
    <property type="match status" value="1"/>
</dbReference>
<dbReference type="PROSITE" id="PS00164">
    <property type="entry name" value="ENOLASE"/>
    <property type="match status" value="1"/>
</dbReference>
<gene>
    <name evidence="1" type="primary">eno</name>
    <name type="ordered locus">PSEEN4200</name>
</gene>
<sequence length="429" mass="45459">MAKIVDIKGREVLDSRGNPTVEADVLLDNGIIGSACAPSGASTGSREALELRDGDKSRYLGKGVLKAVANINGPIRDLLLGKDPADQKALDRAMIELDGTENKAKLGANAILAVSLAAAKAAAQDLDLPLYAHIANLNGTPGQYSMPVPMMNIINGGEHADNNVDIQEFMVQPVGAKTFSDGLRMGTEIFHHLKAVLKARGLNTAVGDEGGFAPNLASNEDALGAIAEAVEKAGYKLGTDVTLALDCAASEFYEDGKYNLSGEGKSFDAEGFADYLKGLTERFPIISIEDGLDESDWAGWKILTDKIGEKVQLVGDDLFVTNTKILKEGIEKGIGNSILIKFNQIGSLTETLEAIQMAKAAGYTAVISHRSGETEDSTIADLAVGTAAGQIKTGSLCRSDRVSKYNQLLRIEEQLGAKAVYRGRAEFRG</sequence>
<protein>
    <recommendedName>
        <fullName evidence="1">Enolase</fullName>
        <ecNumber evidence="1">4.2.1.11</ecNumber>
    </recommendedName>
    <alternativeName>
        <fullName evidence="1">2-phospho-D-glycerate hydro-lyase</fullName>
    </alternativeName>
    <alternativeName>
        <fullName evidence="1">2-phosphoglycerate dehydratase</fullName>
    </alternativeName>
</protein>
<evidence type="ECO:0000255" key="1">
    <source>
        <dbReference type="HAMAP-Rule" id="MF_00318"/>
    </source>
</evidence>
<organism>
    <name type="scientific">Pseudomonas entomophila (strain L48)</name>
    <dbReference type="NCBI Taxonomy" id="384676"/>
    <lineage>
        <taxon>Bacteria</taxon>
        <taxon>Pseudomonadati</taxon>
        <taxon>Pseudomonadota</taxon>
        <taxon>Gammaproteobacteria</taxon>
        <taxon>Pseudomonadales</taxon>
        <taxon>Pseudomonadaceae</taxon>
        <taxon>Pseudomonas</taxon>
    </lineage>
</organism>
<keyword id="KW-0963">Cytoplasm</keyword>
<keyword id="KW-0324">Glycolysis</keyword>
<keyword id="KW-0456">Lyase</keyword>
<keyword id="KW-0460">Magnesium</keyword>
<keyword id="KW-0479">Metal-binding</keyword>
<keyword id="KW-0964">Secreted</keyword>
<feature type="chain" id="PRO_0000280872" description="Enolase">
    <location>
        <begin position="1"/>
        <end position="429"/>
    </location>
</feature>
<feature type="active site" description="Proton donor" evidence="1">
    <location>
        <position position="209"/>
    </location>
</feature>
<feature type="active site" description="Proton acceptor" evidence="1">
    <location>
        <position position="341"/>
    </location>
</feature>
<feature type="binding site" evidence="1">
    <location>
        <position position="167"/>
    </location>
    <ligand>
        <name>(2R)-2-phosphoglycerate</name>
        <dbReference type="ChEBI" id="CHEBI:58289"/>
    </ligand>
</feature>
<feature type="binding site" evidence="1">
    <location>
        <position position="246"/>
    </location>
    <ligand>
        <name>Mg(2+)</name>
        <dbReference type="ChEBI" id="CHEBI:18420"/>
    </ligand>
</feature>
<feature type="binding site" evidence="1">
    <location>
        <position position="289"/>
    </location>
    <ligand>
        <name>Mg(2+)</name>
        <dbReference type="ChEBI" id="CHEBI:18420"/>
    </ligand>
</feature>
<feature type="binding site" evidence="1">
    <location>
        <position position="316"/>
    </location>
    <ligand>
        <name>Mg(2+)</name>
        <dbReference type="ChEBI" id="CHEBI:18420"/>
    </ligand>
</feature>
<feature type="binding site" evidence="1">
    <location>
        <position position="341"/>
    </location>
    <ligand>
        <name>(2R)-2-phosphoglycerate</name>
        <dbReference type="ChEBI" id="CHEBI:58289"/>
    </ligand>
</feature>
<feature type="binding site" evidence="1">
    <location>
        <position position="370"/>
    </location>
    <ligand>
        <name>(2R)-2-phosphoglycerate</name>
        <dbReference type="ChEBI" id="CHEBI:58289"/>
    </ligand>
</feature>
<feature type="binding site" evidence="1">
    <location>
        <position position="371"/>
    </location>
    <ligand>
        <name>(2R)-2-phosphoglycerate</name>
        <dbReference type="ChEBI" id="CHEBI:58289"/>
    </ligand>
</feature>
<feature type="binding site" evidence="1">
    <location>
        <position position="392"/>
    </location>
    <ligand>
        <name>(2R)-2-phosphoglycerate</name>
        <dbReference type="ChEBI" id="CHEBI:58289"/>
    </ligand>
</feature>